<keyword id="KW-0687">Ribonucleoprotein</keyword>
<keyword id="KW-0689">Ribosomal protein</keyword>
<keyword id="KW-0694">RNA-binding</keyword>
<keyword id="KW-0699">rRNA-binding</keyword>
<organism>
    <name type="scientific">Bacillus pumilus (strain SAFR-032)</name>
    <dbReference type="NCBI Taxonomy" id="315750"/>
    <lineage>
        <taxon>Bacteria</taxon>
        <taxon>Bacillati</taxon>
        <taxon>Bacillota</taxon>
        <taxon>Bacilli</taxon>
        <taxon>Bacillales</taxon>
        <taxon>Bacillaceae</taxon>
        <taxon>Bacillus</taxon>
    </lineage>
</organism>
<reference key="1">
    <citation type="journal article" date="2007" name="PLoS ONE">
        <title>Paradoxical DNA repair and peroxide resistance gene conservation in Bacillus pumilus SAFR-032.</title>
        <authorList>
            <person name="Gioia J."/>
            <person name="Yerrapragada S."/>
            <person name="Qin X."/>
            <person name="Jiang H."/>
            <person name="Igboeli O.C."/>
            <person name="Muzny D."/>
            <person name="Dugan-Rocha S."/>
            <person name="Ding Y."/>
            <person name="Hawes A."/>
            <person name="Liu W."/>
            <person name="Perez L."/>
            <person name="Kovar C."/>
            <person name="Dinh H."/>
            <person name="Lee S."/>
            <person name="Nazareth L."/>
            <person name="Blyth P."/>
            <person name="Holder M."/>
            <person name="Buhay C."/>
            <person name="Tirumalai M.R."/>
            <person name="Liu Y."/>
            <person name="Dasgupta I."/>
            <person name="Bokhetache L."/>
            <person name="Fujita M."/>
            <person name="Karouia F."/>
            <person name="Eswara Moorthy P."/>
            <person name="Siefert J."/>
            <person name="Uzman A."/>
            <person name="Buzumbo P."/>
            <person name="Verma A."/>
            <person name="Zwiya H."/>
            <person name="McWilliams B.D."/>
            <person name="Olowu A."/>
            <person name="Clinkenbeard K.D."/>
            <person name="Newcombe D."/>
            <person name="Golebiewski L."/>
            <person name="Petrosino J.F."/>
            <person name="Nicholson W.L."/>
            <person name="Fox G.E."/>
            <person name="Venkateswaran K."/>
            <person name="Highlander S.K."/>
            <person name="Weinstock G.M."/>
        </authorList>
    </citation>
    <scope>NUCLEOTIDE SEQUENCE [LARGE SCALE GENOMIC DNA]</scope>
    <source>
        <strain>SAFR-032</strain>
    </source>
</reference>
<name>RL18_BACP2</name>
<evidence type="ECO:0000255" key="1">
    <source>
        <dbReference type="HAMAP-Rule" id="MF_01337"/>
    </source>
</evidence>
<evidence type="ECO:0000305" key="2"/>
<accession>A8F9A1</accession>
<protein>
    <recommendedName>
        <fullName evidence="1">Large ribosomal subunit protein uL18</fullName>
    </recommendedName>
    <alternativeName>
        <fullName evidence="2">50S ribosomal protein L18</fullName>
    </alternativeName>
</protein>
<feature type="chain" id="PRO_1000067637" description="Large ribosomal subunit protein uL18">
    <location>
        <begin position="1"/>
        <end position="120"/>
    </location>
</feature>
<sequence>MITKTSKNATRLKRHARVRAKLSGTAERPRLNVFRSNKNIYAQVIDDVNGVTLVSASTLDKDLKIENSSDAAAATKVGELVAKRAVEKGISNVVFDRGGYLYHGRVKALAEAAREAGLKF</sequence>
<comment type="function">
    <text evidence="1">This is one of the proteins that bind and probably mediate the attachment of the 5S RNA into the large ribosomal subunit, where it forms part of the central protuberance.</text>
</comment>
<comment type="subunit">
    <text evidence="1">Part of the 50S ribosomal subunit; part of the 5S rRNA/L5/L18/L25 subcomplex. Contacts the 5S and 23S rRNAs.</text>
</comment>
<comment type="similarity">
    <text evidence="1">Belongs to the universal ribosomal protein uL18 family.</text>
</comment>
<proteinExistence type="inferred from homology"/>
<dbReference type="EMBL" id="CP000813">
    <property type="protein sequence ID" value="ABV60818.1"/>
    <property type="molecule type" value="Genomic_DNA"/>
</dbReference>
<dbReference type="RefSeq" id="WP_012008708.1">
    <property type="nucleotide sequence ID" value="NZ_VEIS01000020.1"/>
</dbReference>
<dbReference type="SMR" id="A8F9A1"/>
<dbReference type="STRING" id="315750.BPUM_0118"/>
<dbReference type="GeneID" id="5619360"/>
<dbReference type="KEGG" id="bpu:BPUM_0118"/>
<dbReference type="eggNOG" id="COG0256">
    <property type="taxonomic scope" value="Bacteria"/>
</dbReference>
<dbReference type="HOGENOM" id="CLU_098841_0_1_9"/>
<dbReference type="OrthoDB" id="9810939at2"/>
<dbReference type="Proteomes" id="UP000001355">
    <property type="component" value="Chromosome"/>
</dbReference>
<dbReference type="GO" id="GO:0022625">
    <property type="term" value="C:cytosolic large ribosomal subunit"/>
    <property type="evidence" value="ECO:0007669"/>
    <property type="project" value="TreeGrafter"/>
</dbReference>
<dbReference type="GO" id="GO:0008097">
    <property type="term" value="F:5S rRNA binding"/>
    <property type="evidence" value="ECO:0007669"/>
    <property type="project" value="TreeGrafter"/>
</dbReference>
<dbReference type="GO" id="GO:0003735">
    <property type="term" value="F:structural constituent of ribosome"/>
    <property type="evidence" value="ECO:0007669"/>
    <property type="project" value="InterPro"/>
</dbReference>
<dbReference type="GO" id="GO:0006412">
    <property type="term" value="P:translation"/>
    <property type="evidence" value="ECO:0007669"/>
    <property type="project" value="UniProtKB-UniRule"/>
</dbReference>
<dbReference type="CDD" id="cd00432">
    <property type="entry name" value="Ribosomal_L18_L5e"/>
    <property type="match status" value="1"/>
</dbReference>
<dbReference type="FunFam" id="3.30.420.100:FF:000001">
    <property type="entry name" value="50S ribosomal protein L18"/>
    <property type="match status" value="1"/>
</dbReference>
<dbReference type="Gene3D" id="3.30.420.100">
    <property type="match status" value="1"/>
</dbReference>
<dbReference type="HAMAP" id="MF_01337_B">
    <property type="entry name" value="Ribosomal_uL18_B"/>
    <property type="match status" value="1"/>
</dbReference>
<dbReference type="InterPro" id="IPR004389">
    <property type="entry name" value="Ribosomal_uL18_bac-type"/>
</dbReference>
<dbReference type="InterPro" id="IPR005484">
    <property type="entry name" value="Ribosomal_uL18_bac/euk"/>
</dbReference>
<dbReference type="NCBIfam" id="TIGR00060">
    <property type="entry name" value="L18_bact"/>
    <property type="match status" value="1"/>
</dbReference>
<dbReference type="PANTHER" id="PTHR12899">
    <property type="entry name" value="39S RIBOSOMAL PROTEIN L18, MITOCHONDRIAL"/>
    <property type="match status" value="1"/>
</dbReference>
<dbReference type="PANTHER" id="PTHR12899:SF3">
    <property type="entry name" value="LARGE RIBOSOMAL SUBUNIT PROTEIN UL18M"/>
    <property type="match status" value="1"/>
</dbReference>
<dbReference type="Pfam" id="PF00861">
    <property type="entry name" value="Ribosomal_L18p"/>
    <property type="match status" value="1"/>
</dbReference>
<dbReference type="SUPFAM" id="SSF53137">
    <property type="entry name" value="Translational machinery components"/>
    <property type="match status" value="1"/>
</dbReference>
<gene>
    <name evidence="1" type="primary">rplR</name>
    <name type="ordered locus">BPUM_0118</name>
</gene>